<comment type="function">
    <text evidence="1">GTPase that plays an essential role in the late steps of ribosome biogenesis.</text>
</comment>
<comment type="subunit">
    <text evidence="1">Associates with the 50S ribosomal subunit.</text>
</comment>
<comment type="similarity">
    <text evidence="1">Belongs to the TRAFAC class TrmE-Era-EngA-EngB-Septin-like GTPase superfamily. EngA (Der) GTPase family.</text>
</comment>
<proteinExistence type="inferred from homology"/>
<keyword id="KW-0342">GTP-binding</keyword>
<keyword id="KW-0547">Nucleotide-binding</keyword>
<keyword id="KW-1185">Reference proteome</keyword>
<keyword id="KW-0677">Repeat</keyword>
<keyword id="KW-0690">Ribosome biogenesis</keyword>
<dbReference type="EMBL" id="BX293980">
    <property type="protein sequence ID" value="CAE77040.1"/>
    <property type="molecule type" value="Genomic_DNA"/>
</dbReference>
<dbReference type="RefSeq" id="NP_975398.1">
    <property type="nucleotide sequence ID" value="NC_005364.2"/>
</dbReference>
<dbReference type="RefSeq" id="WP_011166596.1">
    <property type="nucleotide sequence ID" value="NC_005364.2"/>
</dbReference>
<dbReference type="SMR" id="Q6MTJ6"/>
<dbReference type="STRING" id="272632.MSC_0408"/>
<dbReference type="KEGG" id="mmy:MSC_0408"/>
<dbReference type="PATRIC" id="fig|272632.4.peg.442"/>
<dbReference type="eggNOG" id="COG1160">
    <property type="taxonomic scope" value="Bacteria"/>
</dbReference>
<dbReference type="HOGENOM" id="CLU_016077_6_2_14"/>
<dbReference type="Proteomes" id="UP000001016">
    <property type="component" value="Chromosome"/>
</dbReference>
<dbReference type="GO" id="GO:0016887">
    <property type="term" value="F:ATP hydrolysis activity"/>
    <property type="evidence" value="ECO:0007669"/>
    <property type="project" value="InterPro"/>
</dbReference>
<dbReference type="GO" id="GO:0005525">
    <property type="term" value="F:GTP binding"/>
    <property type="evidence" value="ECO:0007669"/>
    <property type="project" value="UniProtKB-UniRule"/>
</dbReference>
<dbReference type="GO" id="GO:0043022">
    <property type="term" value="F:ribosome binding"/>
    <property type="evidence" value="ECO:0007669"/>
    <property type="project" value="TreeGrafter"/>
</dbReference>
<dbReference type="GO" id="GO:0042254">
    <property type="term" value="P:ribosome biogenesis"/>
    <property type="evidence" value="ECO:0007669"/>
    <property type="project" value="UniProtKB-KW"/>
</dbReference>
<dbReference type="CDD" id="cd01894">
    <property type="entry name" value="EngA1"/>
    <property type="match status" value="1"/>
</dbReference>
<dbReference type="CDD" id="cd01895">
    <property type="entry name" value="EngA2"/>
    <property type="match status" value="1"/>
</dbReference>
<dbReference type="FunFam" id="3.30.300.20:FF:000004">
    <property type="entry name" value="GTPase Der"/>
    <property type="match status" value="1"/>
</dbReference>
<dbReference type="FunFam" id="3.40.50.300:FF:000040">
    <property type="entry name" value="GTPase Der"/>
    <property type="match status" value="1"/>
</dbReference>
<dbReference type="FunFam" id="3.40.50.300:FF:000057">
    <property type="entry name" value="GTPase Der"/>
    <property type="match status" value="1"/>
</dbReference>
<dbReference type="Gene3D" id="3.30.300.20">
    <property type="match status" value="1"/>
</dbReference>
<dbReference type="Gene3D" id="3.40.50.300">
    <property type="entry name" value="P-loop containing nucleotide triphosphate hydrolases"/>
    <property type="match status" value="2"/>
</dbReference>
<dbReference type="HAMAP" id="MF_00195">
    <property type="entry name" value="GTPase_Der"/>
    <property type="match status" value="1"/>
</dbReference>
<dbReference type="InterPro" id="IPR003593">
    <property type="entry name" value="AAA+_ATPase"/>
</dbReference>
<dbReference type="InterPro" id="IPR031166">
    <property type="entry name" value="G_ENGA"/>
</dbReference>
<dbReference type="InterPro" id="IPR006073">
    <property type="entry name" value="GTP-bd"/>
</dbReference>
<dbReference type="InterPro" id="IPR016484">
    <property type="entry name" value="GTPase_Der"/>
</dbReference>
<dbReference type="InterPro" id="IPR032859">
    <property type="entry name" value="KH_dom-like"/>
</dbReference>
<dbReference type="InterPro" id="IPR015946">
    <property type="entry name" value="KH_dom-like_a/b"/>
</dbReference>
<dbReference type="InterPro" id="IPR027417">
    <property type="entry name" value="P-loop_NTPase"/>
</dbReference>
<dbReference type="InterPro" id="IPR005225">
    <property type="entry name" value="Small_GTP-bd"/>
</dbReference>
<dbReference type="NCBIfam" id="TIGR03594">
    <property type="entry name" value="GTPase_EngA"/>
    <property type="match status" value="1"/>
</dbReference>
<dbReference type="NCBIfam" id="TIGR00231">
    <property type="entry name" value="small_GTP"/>
    <property type="match status" value="2"/>
</dbReference>
<dbReference type="PANTHER" id="PTHR43834">
    <property type="entry name" value="GTPASE DER"/>
    <property type="match status" value="1"/>
</dbReference>
<dbReference type="PANTHER" id="PTHR43834:SF6">
    <property type="entry name" value="GTPASE DER"/>
    <property type="match status" value="1"/>
</dbReference>
<dbReference type="Pfam" id="PF14714">
    <property type="entry name" value="KH_dom-like"/>
    <property type="match status" value="1"/>
</dbReference>
<dbReference type="Pfam" id="PF01926">
    <property type="entry name" value="MMR_HSR1"/>
    <property type="match status" value="2"/>
</dbReference>
<dbReference type="PIRSF" id="PIRSF006485">
    <property type="entry name" value="GTP-binding_EngA"/>
    <property type="match status" value="1"/>
</dbReference>
<dbReference type="PRINTS" id="PR00326">
    <property type="entry name" value="GTP1OBG"/>
</dbReference>
<dbReference type="SMART" id="SM00382">
    <property type="entry name" value="AAA"/>
    <property type="match status" value="2"/>
</dbReference>
<dbReference type="SUPFAM" id="SSF52540">
    <property type="entry name" value="P-loop containing nucleoside triphosphate hydrolases"/>
    <property type="match status" value="2"/>
</dbReference>
<dbReference type="PROSITE" id="PS51712">
    <property type="entry name" value="G_ENGA"/>
    <property type="match status" value="2"/>
</dbReference>
<organism>
    <name type="scientific">Mycoplasma mycoides subsp. mycoides SC (strain CCUG 32753 / NCTC 10114 / PG1)</name>
    <dbReference type="NCBI Taxonomy" id="272632"/>
    <lineage>
        <taxon>Bacteria</taxon>
        <taxon>Bacillati</taxon>
        <taxon>Mycoplasmatota</taxon>
        <taxon>Mollicutes</taxon>
        <taxon>Mycoplasmataceae</taxon>
        <taxon>Mycoplasma</taxon>
    </lineage>
</organism>
<evidence type="ECO:0000255" key="1">
    <source>
        <dbReference type="HAMAP-Rule" id="MF_00195"/>
    </source>
</evidence>
<gene>
    <name evidence="1" type="primary">der</name>
    <name type="synonym">engA</name>
    <name type="ordered locus">MSC_0408</name>
</gene>
<feature type="chain" id="PRO_1000011670" description="GTPase Der">
    <location>
        <begin position="1"/>
        <end position="435"/>
    </location>
</feature>
<feature type="domain" description="EngA-type G 1">
    <location>
        <begin position="4"/>
        <end position="167"/>
    </location>
</feature>
<feature type="domain" description="EngA-type G 2">
    <location>
        <begin position="175"/>
        <end position="350"/>
    </location>
</feature>
<feature type="domain" description="KH-like" evidence="1">
    <location>
        <begin position="351"/>
        <end position="435"/>
    </location>
</feature>
<feature type="binding site" evidence="1">
    <location>
        <begin position="10"/>
        <end position="17"/>
    </location>
    <ligand>
        <name>GTP</name>
        <dbReference type="ChEBI" id="CHEBI:37565"/>
        <label>1</label>
    </ligand>
</feature>
<feature type="binding site" evidence="1">
    <location>
        <begin position="57"/>
        <end position="61"/>
    </location>
    <ligand>
        <name>GTP</name>
        <dbReference type="ChEBI" id="CHEBI:37565"/>
        <label>1</label>
    </ligand>
</feature>
<feature type="binding site" evidence="1">
    <location>
        <begin position="119"/>
        <end position="122"/>
    </location>
    <ligand>
        <name>GTP</name>
        <dbReference type="ChEBI" id="CHEBI:37565"/>
        <label>1</label>
    </ligand>
</feature>
<feature type="binding site" evidence="1">
    <location>
        <begin position="181"/>
        <end position="188"/>
    </location>
    <ligand>
        <name>GTP</name>
        <dbReference type="ChEBI" id="CHEBI:37565"/>
        <label>2</label>
    </ligand>
</feature>
<feature type="binding site" evidence="1">
    <location>
        <begin position="228"/>
        <end position="232"/>
    </location>
    <ligand>
        <name>GTP</name>
        <dbReference type="ChEBI" id="CHEBI:37565"/>
        <label>2</label>
    </ligand>
</feature>
<feature type="binding site" evidence="1">
    <location>
        <begin position="293"/>
        <end position="296"/>
    </location>
    <ligand>
        <name>GTP</name>
        <dbReference type="ChEBI" id="CHEBI:37565"/>
        <label>2</label>
    </ligand>
</feature>
<reference key="1">
    <citation type="journal article" date="2004" name="Genome Res.">
        <title>The genome sequence of Mycoplasma mycoides subsp. mycoides SC type strain PG1T, the causative agent of contagious bovine pleuropneumonia (CBPP).</title>
        <authorList>
            <person name="Westberg J."/>
            <person name="Persson A."/>
            <person name="Holmberg A."/>
            <person name="Goesmann A."/>
            <person name="Lundeberg J."/>
            <person name="Johansson K.-E."/>
            <person name="Pettersson B."/>
            <person name="Uhlen M."/>
        </authorList>
    </citation>
    <scope>NUCLEOTIDE SEQUENCE [LARGE SCALE GENOMIC DNA]</scope>
    <source>
        <strain>CCUG 32753 / NCTC 10114 / PG1</strain>
    </source>
</reference>
<sequence>MKKKIVAIIGRPNVGKSSLFNRIIKEKKSIVDNKPGVTRDRIYSNAEWLTREFILVDTGGISIDQQLFSNEIQIQTQIAIEQADVIIFVVDFLNRLDKDDKMIAKILHKSKKPVILAINKYDKKTIDDHNYEFMNLGFSDLYFISSTHGIGIGDLLDKVISYISKNDVDLKDDSTKIAIIGRPNVGKSSLVNSLVNENRMIVSEIEGTTLDAVDISFSYNKNKYTVIDTAGIRKKSKLGQTVEKYSYLRSLSAITNSDIVLLMIDATKPITDQDTNIGGLIYDEKKPVIIVVNKWDLVKNKQEQILKKEEEIRAYFKYISYAKIIFISALDKTRVTKILDLVADIKQSLSVKVKTYVLNEVLNKAQLINPAPEFNGNRLKIYYASQVQAYIPTFVLFCNHPNYLHFSYKRFLENQIRFSFGFDSIPINLIFRERK</sequence>
<accession>Q6MTJ6</accession>
<name>DER_MYCMS</name>
<protein>
    <recommendedName>
        <fullName evidence="1">GTPase Der</fullName>
    </recommendedName>
    <alternativeName>
        <fullName evidence="1">GTP-binding protein EngA</fullName>
    </alternativeName>
</protein>